<sequence length="147" mass="16638">MTEADIAVKSSPRDYKKLTRLYCMNGGFHLQILADGTVAGAADENTYSILRIKATSPGVVVIEGSETGLYLSMNEHGKLYASSLVTDESYFLEKMEENHYNTYQSQKYGENWYVGIKKNGKMKRGPRTHIGQKAIFFLPRQVEQEED</sequence>
<comment type="function">
    <text evidence="2">Plays an important role in the regulation of cell survival, cell division, angiogenesis, cell differentiation and cell migration. Functions as a potent mitogen in vitro. Acts as a ligand for FGFR1 and integrins. Binds to FGFR1 in the presence of heparin leading to FGFR1 dimerization and activation via sequential autophosphorylation on tyrosine residues which act as docking sites for interacting proteins, leading to the activation of several signaling cascades. Binds to integrins. Its binding to integrins and subsequent ternary complex formation with integrins and FGFR1 are essential for FGF1 signaling.</text>
</comment>
<comment type="subcellular location">
    <subcellularLocation>
        <location evidence="1">Secreted</location>
    </subcellularLocation>
    <subcellularLocation>
        <location evidence="1">Cytoplasm</location>
    </subcellularLocation>
    <subcellularLocation>
        <location evidence="1">Cytoplasm</location>
        <location evidence="1">Cell cortex</location>
    </subcellularLocation>
    <subcellularLocation>
        <location evidence="1">Cytoplasm</location>
        <location evidence="1">Cytosol</location>
    </subcellularLocation>
    <subcellularLocation>
        <location evidence="1">Nucleus</location>
    </subcellularLocation>
    <text evidence="1">Lacks a cleavable signal sequence. Within the cytoplasm, it is transported to the cell membrane and then secreted by a non-classical pathway that requires Cu(2+) ions and S100A13 (By similarity). Binding of exogenous FGF1 to FGFR facilitates endocytosis followed by translocation of FGF1 across endosomal membrane into the cytosol. Nuclear import from the cytosol requires the classical nuclear import machinery (By similarity).</text>
</comment>
<comment type="similarity">
    <text evidence="3">Belongs to the heparin-binding growth factors family.</text>
</comment>
<dbReference type="EMBL" id="AB194698">
    <property type="protein sequence ID" value="BAD69615.1"/>
    <property type="molecule type" value="mRNA"/>
</dbReference>
<dbReference type="EMBL" id="BC059588">
    <property type="protein sequence ID" value="AAH59588.1"/>
    <property type="molecule type" value="mRNA"/>
</dbReference>
<dbReference type="RefSeq" id="NP_957054.1">
    <property type="nucleotide sequence ID" value="NM_200760.1"/>
</dbReference>
<dbReference type="SMR" id="Q6PBT8"/>
<dbReference type="FunCoup" id="Q6PBT8">
    <property type="interactions" value="387"/>
</dbReference>
<dbReference type="STRING" id="7955.ENSDARP00000008825"/>
<dbReference type="PaxDb" id="7955-ENSDARP00000008825"/>
<dbReference type="GeneID" id="393733"/>
<dbReference type="KEGG" id="dre:393733"/>
<dbReference type="AGR" id="ZFIN:ZDB-GENE-040426-1729"/>
<dbReference type="CTD" id="393733"/>
<dbReference type="ZFIN" id="ZDB-GENE-040426-1729">
    <property type="gene designation" value="fgf1a"/>
</dbReference>
<dbReference type="eggNOG" id="KOG3885">
    <property type="taxonomic scope" value="Eukaryota"/>
</dbReference>
<dbReference type="InParanoid" id="Q6PBT8"/>
<dbReference type="OrthoDB" id="5987799at2759"/>
<dbReference type="PhylomeDB" id="Q6PBT8"/>
<dbReference type="TreeFam" id="TF317805"/>
<dbReference type="Reactome" id="R-DRE-1257604">
    <property type="pathway name" value="PIP3 activates AKT signaling"/>
</dbReference>
<dbReference type="Reactome" id="R-DRE-190322">
    <property type="pathway name" value="FGFR4 ligand binding and activation"/>
</dbReference>
<dbReference type="Reactome" id="R-DRE-190370">
    <property type="pathway name" value="FGFR1b ligand binding and activation"/>
</dbReference>
<dbReference type="Reactome" id="R-DRE-190371">
    <property type="pathway name" value="FGFR3b ligand binding and activation"/>
</dbReference>
<dbReference type="Reactome" id="R-DRE-190372">
    <property type="pathway name" value="FGFR3c ligand binding and activation"/>
</dbReference>
<dbReference type="Reactome" id="R-DRE-190373">
    <property type="pathway name" value="FGFR1c ligand binding and activation"/>
</dbReference>
<dbReference type="Reactome" id="R-DRE-190375">
    <property type="pathway name" value="FGFR2c ligand binding and activation"/>
</dbReference>
<dbReference type="Reactome" id="R-DRE-190377">
    <property type="pathway name" value="FGFR2b ligand binding and activation"/>
</dbReference>
<dbReference type="Reactome" id="R-DRE-5654219">
    <property type="pathway name" value="Phospholipase C-mediated cascade: FGFR1"/>
</dbReference>
<dbReference type="Reactome" id="R-DRE-5654221">
    <property type="pathway name" value="Phospholipase C-mediated cascade, FGFR2"/>
</dbReference>
<dbReference type="Reactome" id="R-DRE-5654227">
    <property type="pathway name" value="Phospholipase C-mediated cascade, FGFR3"/>
</dbReference>
<dbReference type="Reactome" id="R-DRE-5654228">
    <property type="pathway name" value="Phospholipase C-mediated cascade, FGFR4"/>
</dbReference>
<dbReference type="Reactome" id="R-DRE-5654687">
    <property type="pathway name" value="Downstream signaling of activated FGFR1"/>
</dbReference>
<dbReference type="Reactome" id="R-DRE-5654688">
    <property type="pathway name" value="SHC-mediated cascade:FGFR1"/>
</dbReference>
<dbReference type="Reactome" id="R-DRE-5654689">
    <property type="pathway name" value="PI-3K cascade:FGFR1"/>
</dbReference>
<dbReference type="Reactome" id="R-DRE-5654693">
    <property type="pathway name" value="FRS-mediated FGFR1 signaling"/>
</dbReference>
<dbReference type="Reactome" id="R-DRE-5654699">
    <property type="pathway name" value="SHC-mediated cascade:FGFR2"/>
</dbReference>
<dbReference type="Reactome" id="R-DRE-5654700">
    <property type="pathway name" value="FRS-mediated FGFR2 signaling"/>
</dbReference>
<dbReference type="Reactome" id="R-DRE-5654704">
    <property type="pathway name" value="SHC-mediated cascade:FGFR3"/>
</dbReference>
<dbReference type="Reactome" id="R-DRE-5654706">
    <property type="pathway name" value="FRS-mediated FGFR3 signaling"/>
</dbReference>
<dbReference type="Reactome" id="R-DRE-5654712">
    <property type="pathway name" value="FRS-mediated FGFR4 signaling"/>
</dbReference>
<dbReference type="Reactome" id="R-DRE-5654726">
    <property type="pathway name" value="Negative regulation of FGFR1 signaling"/>
</dbReference>
<dbReference type="Reactome" id="R-DRE-5673001">
    <property type="pathway name" value="RAF/MAP kinase cascade"/>
</dbReference>
<dbReference type="Reactome" id="R-DRE-6811558">
    <property type="pathway name" value="PI5P, PP2A and IER3 Regulate PI3K/AKT Signaling"/>
</dbReference>
<dbReference type="PRO" id="PR:Q6PBT8"/>
<dbReference type="Proteomes" id="UP000000437">
    <property type="component" value="Alternate scaffold 14"/>
</dbReference>
<dbReference type="Proteomes" id="UP000000437">
    <property type="component" value="Chromosome 14"/>
</dbReference>
<dbReference type="GO" id="GO:0005938">
    <property type="term" value="C:cell cortex"/>
    <property type="evidence" value="ECO:0007669"/>
    <property type="project" value="UniProtKB-SubCell"/>
</dbReference>
<dbReference type="GO" id="GO:0005737">
    <property type="term" value="C:cytoplasm"/>
    <property type="evidence" value="ECO:0000318"/>
    <property type="project" value="GO_Central"/>
</dbReference>
<dbReference type="GO" id="GO:0005829">
    <property type="term" value="C:cytosol"/>
    <property type="evidence" value="ECO:0000250"/>
    <property type="project" value="UniProtKB"/>
</dbReference>
<dbReference type="GO" id="GO:0005576">
    <property type="term" value="C:extracellular region"/>
    <property type="evidence" value="ECO:0000250"/>
    <property type="project" value="UniProtKB"/>
</dbReference>
<dbReference type="GO" id="GO:0005615">
    <property type="term" value="C:extracellular space"/>
    <property type="evidence" value="ECO:0000250"/>
    <property type="project" value="UniProtKB"/>
</dbReference>
<dbReference type="GO" id="GO:0005634">
    <property type="term" value="C:nucleus"/>
    <property type="evidence" value="ECO:0000318"/>
    <property type="project" value="GO_Central"/>
</dbReference>
<dbReference type="GO" id="GO:0005104">
    <property type="term" value="F:fibroblast growth factor receptor binding"/>
    <property type="evidence" value="ECO:0000250"/>
    <property type="project" value="UniProtKB"/>
</dbReference>
<dbReference type="GO" id="GO:0008083">
    <property type="term" value="F:growth factor activity"/>
    <property type="evidence" value="ECO:0000250"/>
    <property type="project" value="UniProtKB"/>
</dbReference>
<dbReference type="GO" id="GO:0008201">
    <property type="term" value="F:heparin binding"/>
    <property type="evidence" value="ECO:0000250"/>
    <property type="project" value="UniProtKB"/>
</dbReference>
<dbReference type="GO" id="GO:0005178">
    <property type="term" value="F:integrin binding"/>
    <property type="evidence" value="ECO:0000250"/>
    <property type="project" value="UniProtKB"/>
</dbReference>
<dbReference type="GO" id="GO:0044548">
    <property type="term" value="F:S100 protein binding"/>
    <property type="evidence" value="ECO:0000250"/>
    <property type="project" value="UniProtKB"/>
</dbReference>
<dbReference type="GO" id="GO:0001525">
    <property type="term" value="P:angiogenesis"/>
    <property type="evidence" value="ECO:0007669"/>
    <property type="project" value="UniProtKB-KW"/>
</dbReference>
<dbReference type="GO" id="GO:0060681">
    <property type="term" value="P:branch elongation involved in ureteric bud branching"/>
    <property type="evidence" value="ECO:0000250"/>
    <property type="project" value="UniProtKB"/>
</dbReference>
<dbReference type="GO" id="GO:0008543">
    <property type="term" value="P:fibroblast growth factor receptor signaling pathway"/>
    <property type="evidence" value="ECO:0000250"/>
    <property type="project" value="UniProtKB"/>
</dbReference>
<dbReference type="GO" id="GO:0030097">
    <property type="term" value="P:hemopoiesis"/>
    <property type="evidence" value="ECO:0000315"/>
    <property type="project" value="ZFIN"/>
</dbReference>
<dbReference type="GO" id="GO:0072163">
    <property type="term" value="P:mesonephric epithelium development"/>
    <property type="evidence" value="ECO:0000250"/>
    <property type="project" value="UniProtKB"/>
</dbReference>
<dbReference type="GO" id="GO:0022008">
    <property type="term" value="P:neurogenesis"/>
    <property type="evidence" value="ECO:0000318"/>
    <property type="project" value="GO_Central"/>
</dbReference>
<dbReference type="GO" id="GO:0045766">
    <property type="term" value="P:positive regulation of angiogenesis"/>
    <property type="evidence" value="ECO:0000250"/>
    <property type="project" value="UniProtKB"/>
</dbReference>
<dbReference type="GO" id="GO:0051781">
    <property type="term" value="P:positive regulation of cell division"/>
    <property type="evidence" value="ECO:0000250"/>
    <property type="project" value="UniProtKB"/>
</dbReference>
<dbReference type="GO" id="GO:0030335">
    <property type="term" value="P:positive regulation of cell migration"/>
    <property type="evidence" value="ECO:0000250"/>
    <property type="project" value="UniProtKB"/>
</dbReference>
<dbReference type="GO" id="GO:0008284">
    <property type="term" value="P:positive regulation of cell population proliferation"/>
    <property type="evidence" value="ECO:0000250"/>
    <property type="project" value="UniProtKB"/>
</dbReference>
<dbReference type="GO" id="GO:0045542">
    <property type="term" value="P:positive regulation of cholesterol biosynthetic process"/>
    <property type="evidence" value="ECO:0000250"/>
    <property type="project" value="UniProtKB"/>
</dbReference>
<dbReference type="GO" id="GO:1902533">
    <property type="term" value="P:positive regulation of intracellular signal transduction"/>
    <property type="evidence" value="ECO:0000250"/>
    <property type="project" value="UniProtKB"/>
</dbReference>
<dbReference type="GO" id="GO:0043410">
    <property type="term" value="P:positive regulation of MAPK cascade"/>
    <property type="evidence" value="ECO:0000318"/>
    <property type="project" value="GO_Central"/>
</dbReference>
<dbReference type="GO" id="GO:0045944">
    <property type="term" value="P:positive regulation of transcription by RNA polymerase II"/>
    <property type="evidence" value="ECO:0000250"/>
    <property type="project" value="UniProtKB"/>
</dbReference>
<dbReference type="GO" id="GO:0030334">
    <property type="term" value="P:regulation of cell migration"/>
    <property type="evidence" value="ECO:0000318"/>
    <property type="project" value="GO_Central"/>
</dbReference>
<dbReference type="CDD" id="cd23304">
    <property type="entry name" value="beta-trefoil_FGF1-like"/>
    <property type="match status" value="1"/>
</dbReference>
<dbReference type="FunFam" id="2.80.10.50:FF:000162">
    <property type="entry name" value="Putative fibroblast growth factor 1"/>
    <property type="match status" value="1"/>
</dbReference>
<dbReference type="Gene3D" id="2.80.10.50">
    <property type="match status" value="1"/>
</dbReference>
<dbReference type="InterPro" id="IPR002209">
    <property type="entry name" value="Fibroblast_GF_fam"/>
</dbReference>
<dbReference type="InterPro" id="IPR008996">
    <property type="entry name" value="IL1/FGF"/>
</dbReference>
<dbReference type="PANTHER" id="PTHR11486">
    <property type="entry name" value="FIBROBLAST GROWTH FACTOR"/>
    <property type="match status" value="1"/>
</dbReference>
<dbReference type="Pfam" id="PF00167">
    <property type="entry name" value="FGF"/>
    <property type="match status" value="1"/>
</dbReference>
<dbReference type="PRINTS" id="PR00263">
    <property type="entry name" value="HBGFFGF"/>
</dbReference>
<dbReference type="PRINTS" id="PR00262">
    <property type="entry name" value="IL1HBGF"/>
</dbReference>
<dbReference type="SMART" id="SM00442">
    <property type="entry name" value="FGF"/>
    <property type="match status" value="1"/>
</dbReference>
<dbReference type="SUPFAM" id="SSF50353">
    <property type="entry name" value="Cytokine"/>
    <property type="match status" value="1"/>
</dbReference>
<accession>Q6PBT8</accession>
<accession>Q5TLE3</accession>
<gene>
    <name type="primary">fgf1</name>
    <name type="synonym">fgf-1</name>
    <name type="ORF">zgc:73249</name>
</gene>
<evidence type="ECO:0000250" key="1"/>
<evidence type="ECO:0000250" key="2">
    <source>
        <dbReference type="UniProtKB" id="P05230"/>
    </source>
</evidence>
<evidence type="ECO:0000305" key="3"/>
<reference key="1">
    <citation type="submission" date="2004-11" db="EMBL/GenBank/DDBJ databases">
        <title>Danio rerio fibroblast growth factor 1 (fgf1) mRNA.</title>
        <authorList>
            <person name="Itoh N."/>
        </authorList>
    </citation>
    <scope>NUCLEOTIDE SEQUENCE [MRNA]</scope>
</reference>
<reference key="2">
    <citation type="submission" date="2003-10" db="EMBL/GenBank/DDBJ databases">
        <authorList>
            <consortium name="NIH - Zebrafish Gene Collection (ZGC) project"/>
        </authorList>
    </citation>
    <scope>NUCLEOTIDE SEQUENCE [LARGE SCALE MRNA]</scope>
    <source>
        <tissue>Retina</tissue>
    </source>
</reference>
<proteinExistence type="evidence at transcript level"/>
<keyword id="KW-0037">Angiogenesis</keyword>
<keyword id="KW-0963">Cytoplasm</keyword>
<keyword id="KW-0217">Developmental protein</keyword>
<keyword id="KW-0221">Differentiation</keyword>
<keyword id="KW-0339">Growth factor</keyword>
<keyword id="KW-0358">Heparin-binding</keyword>
<keyword id="KW-0497">Mitogen</keyword>
<keyword id="KW-0539">Nucleus</keyword>
<keyword id="KW-1185">Reference proteome</keyword>
<keyword id="KW-0964">Secreted</keyword>
<name>FGF1_DANRE</name>
<protein>
    <recommendedName>
        <fullName>Putative fibroblast growth factor 1</fullName>
        <shortName>FGF-1</shortName>
    </recommendedName>
    <alternativeName>
        <fullName>Acidic fibroblast growth factor</fullName>
        <shortName>aFGF</shortName>
    </alternativeName>
    <alternativeName>
        <fullName>Heparin-binding growth factor 1</fullName>
        <shortName>HBGF-1</shortName>
    </alternativeName>
</protein>
<organism>
    <name type="scientific">Danio rerio</name>
    <name type="common">Zebrafish</name>
    <name type="synonym">Brachydanio rerio</name>
    <dbReference type="NCBI Taxonomy" id="7955"/>
    <lineage>
        <taxon>Eukaryota</taxon>
        <taxon>Metazoa</taxon>
        <taxon>Chordata</taxon>
        <taxon>Craniata</taxon>
        <taxon>Vertebrata</taxon>
        <taxon>Euteleostomi</taxon>
        <taxon>Actinopterygii</taxon>
        <taxon>Neopterygii</taxon>
        <taxon>Teleostei</taxon>
        <taxon>Ostariophysi</taxon>
        <taxon>Cypriniformes</taxon>
        <taxon>Danionidae</taxon>
        <taxon>Danioninae</taxon>
        <taxon>Danio</taxon>
    </lineage>
</organism>
<feature type="chain" id="PRO_0000147598" description="Putative fibroblast growth factor 1">
    <location>
        <begin position="1"/>
        <end position="147"/>
    </location>
</feature>
<feature type="region of interest" description="Heparin-binding" evidence="1">
    <location>
        <begin position="117"/>
        <end position="133"/>
    </location>
</feature>
<feature type="binding site" evidence="1">
    <location>
        <position position="25"/>
    </location>
    <ligand>
        <name>heparin</name>
        <dbReference type="ChEBI" id="CHEBI:28304"/>
    </ligand>
</feature>
<feature type="sequence conflict" description="In Ref. 1; BAD69615." evidence="3" ref="1">
    <original>Y</original>
    <variation>H</variation>
    <location>
        <position position="108"/>
    </location>
</feature>